<proteinExistence type="inferred from homology"/>
<organism>
    <name type="scientific">Burkholderia mallei (strain NCTC 10247)</name>
    <dbReference type="NCBI Taxonomy" id="320389"/>
    <lineage>
        <taxon>Bacteria</taxon>
        <taxon>Pseudomonadati</taxon>
        <taxon>Pseudomonadota</taxon>
        <taxon>Betaproteobacteria</taxon>
        <taxon>Burkholderiales</taxon>
        <taxon>Burkholderiaceae</taxon>
        <taxon>Burkholderia</taxon>
        <taxon>pseudomallei group</taxon>
    </lineage>
</organism>
<gene>
    <name evidence="1" type="primary">rpoC</name>
    <name type="ordered locus">BMA10247_3470</name>
</gene>
<dbReference type="EC" id="2.7.7.6" evidence="1"/>
<dbReference type="EMBL" id="CP000548">
    <property type="protein sequence ID" value="ABO05070.1"/>
    <property type="molecule type" value="Genomic_DNA"/>
</dbReference>
<dbReference type="RefSeq" id="WP_011857943.1">
    <property type="nucleotide sequence ID" value="NC_009080.1"/>
</dbReference>
<dbReference type="SMR" id="A3MRU6"/>
<dbReference type="KEGG" id="bmaz:BM44_3049"/>
<dbReference type="KEGG" id="bmn:BMA10247_3470"/>
<dbReference type="PATRIC" id="fig|320389.8.peg.3421"/>
<dbReference type="GO" id="GO:0000428">
    <property type="term" value="C:DNA-directed RNA polymerase complex"/>
    <property type="evidence" value="ECO:0007669"/>
    <property type="project" value="UniProtKB-KW"/>
</dbReference>
<dbReference type="GO" id="GO:0003677">
    <property type="term" value="F:DNA binding"/>
    <property type="evidence" value="ECO:0007669"/>
    <property type="project" value="UniProtKB-UniRule"/>
</dbReference>
<dbReference type="GO" id="GO:0003899">
    <property type="term" value="F:DNA-directed RNA polymerase activity"/>
    <property type="evidence" value="ECO:0007669"/>
    <property type="project" value="UniProtKB-UniRule"/>
</dbReference>
<dbReference type="GO" id="GO:0000287">
    <property type="term" value="F:magnesium ion binding"/>
    <property type="evidence" value="ECO:0007669"/>
    <property type="project" value="UniProtKB-UniRule"/>
</dbReference>
<dbReference type="GO" id="GO:0008270">
    <property type="term" value="F:zinc ion binding"/>
    <property type="evidence" value="ECO:0007669"/>
    <property type="project" value="UniProtKB-UniRule"/>
</dbReference>
<dbReference type="GO" id="GO:0006351">
    <property type="term" value="P:DNA-templated transcription"/>
    <property type="evidence" value="ECO:0007669"/>
    <property type="project" value="UniProtKB-UniRule"/>
</dbReference>
<dbReference type="CDD" id="cd02655">
    <property type="entry name" value="RNAP_beta'_C"/>
    <property type="match status" value="1"/>
</dbReference>
<dbReference type="CDD" id="cd01609">
    <property type="entry name" value="RNAP_beta'_N"/>
    <property type="match status" value="1"/>
</dbReference>
<dbReference type="FunFam" id="1.10.132.30:FF:000003">
    <property type="entry name" value="DNA-directed RNA polymerase subunit beta"/>
    <property type="match status" value="1"/>
</dbReference>
<dbReference type="FunFam" id="1.10.150.390:FF:000002">
    <property type="entry name" value="DNA-directed RNA polymerase subunit beta"/>
    <property type="match status" value="1"/>
</dbReference>
<dbReference type="FunFam" id="4.10.860.120:FF:000001">
    <property type="entry name" value="DNA-directed RNA polymerase subunit beta"/>
    <property type="match status" value="1"/>
</dbReference>
<dbReference type="Gene3D" id="1.10.132.30">
    <property type="match status" value="1"/>
</dbReference>
<dbReference type="Gene3D" id="1.10.150.390">
    <property type="match status" value="1"/>
</dbReference>
<dbReference type="Gene3D" id="1.10.1790.20">
    <property type="match status" value="1"/>
</dbReference>
<dbReference type="Gene3D" id="1.10.40.90">
    <property type="match status" value="1"/>
</dbReference>
<dbReference type="Gene3D" id="2.40.40.20">
    <property type="match status" value="1"/>
</dbReference>
<dbReference type="Gene3D" id="2.40.50.100">
    <property type="match status" value="3"/>
</dbReference>
<dbReference type="Gene3D" id="4.10.860.120">
    <property type="entry name" value="RNA polymerase II, clamp domain"/>
    <property type="match status" value="1"/>
</dbReference>
<dbReference type="Gene3D" id="1.10.274.100">
    <property type="entry name" value="RNA polymerase Rpb1, domain 3"/>
    <property type="match status" value="1"/>
</dbReference>
<dbReference type="HAMAP" id="MF_01322">
    <property type="entry name" value="RNApol_bact_RpoC"/>
    <property type="match status" value="1"/>
</dbReference>
<dbReference type="InterPro" id="IPR045867">
    <property type="entry name" value="DNA-dir_RpoC_beta_prime"/>
</dbReference>
<dbReference type="InterPro" id="IPR012754">
    <property type="entry name" value="DNA-dir_RpoC_beta_prime_bact"/>
</dbReference>
<dbReference type="InterPro" id="IPR000722">
    <property type="entry name" value="RNA_pol_asu"/>
</dbReference>
<dbReference type="InterPro" id="IPR006592">
    <property type="entry name" value="RNA_pol_N"/>
</dbReference>
<dbReference type="InterPro" id="IPR007080">
    <property type="entry name" value="RNA_pol_Rpb1_1"/>
</dbReference>
<dbReference type="InterPro" id="IPR007066">
    <property type="entry name" value="RNA_pol_Rpb1_3"/>
</dbReference>
<dbReference type="InterPro" id="IPR042102">
    <property type="entry name" value="RNA_pol_Rpb1_3_sf"/>
</dbReference>
<dbReference type="InterPro" id="IPR007083">
    <property type="entry name" value="RNA_pol_Rpb1_4"/>
</dbReference>
<dbReference type="InterPro" id="IPR007081">
    <property type="entry name" value="RNA_pol_Rpb1_5"/>
</dbReference>
<dbReference type="InterPro" id="IPR044893">
    <property type="entry name" value="RNA_pol_Rpb1_clamp_domain"/>
</dbReference>
<dbReference type="InterPro" id="IPR038120">
    <property type="entry name" value="Rpb1_funnel_sf"/>
</dbReference>
<dbReference type="NCBIfam" id="TIGR02386">
    <property type="entry name" value="rpoC_TIGR"/>
    <property type="match status" value="1"/>
</dbReference>
<dbReference type="PANTHER" id="PTHR19376">
    <property type="entry name" value="DNA-DIRECTED RNA POLYMERASE"/>
    <property type="match status" value="1"/>
</dbReference>
<dbReference type="PANTHER" id="PTHR19376:SF54">
    <property type="entry name" value="DNA-DIRECTED RNA POLYMERASE SUBUNIT BETA"/>
    <property type="match status" value="1"/>
</dbReference>
<dbReference type="Pfam" id="PF04997">
    <property type="entry name" value="RNA_pol_Rpb1_1"/>
    <property type="match status" value="1"/>
</dbReference>
<dbReference type="Pfam" id="PF00623">
    <property type="entry name" value="RNA_pol_Rpb1_2"/>
    <property type="match status" value="2"/>
</dbReference>
<dbReference type="Pfam" id="PF04983">
    <property type="entry name" value="RNA_pol_Rpb1_3"/>
    <property type="match status" value="1"/>
</dbReference>
<dbReference type="Pfam" id="PF05000">
    <property type="entry name" value="RNA_pol_Rpb1_4"/>
    <property type="match status" value="1"/>
</dbReference>
<dbReference type="Pfam" id="PF04998">
    <property type="entry name" value="RNA_pol_Rpb1_5"/>
    <property type="match status" value="1"/>
</dbReference>
<dbReference type="SMART" id="SM00663">
    <property type="entry name" value="RPOLA_N"/>
    <property type="match status" value="1"/>
</dbReference>
<dbReference type="SUPFAM" id="SSF64484">
    <property type="entry name" value="beta and beta-prime subunits of DNA dependent RNA-polymerase"/>
    <property type="match status" value="1"/>
</dbReference>
<reference key="1">
    <citation type="journal article" date="2010" name="Genome Biol. Evol.">
        <title>Continuing evolution of Burkholderia mallei through genome reduction and large-scale rearrangements.</title>
        <authorList>
            <person name="Losada L."/>
            <person name="Ronning C.M."/>
            <person name="DeShazer D."/>
            <person name="Woods D."/>
            <person name="Fedorova N."/>
            <person name="Kim H.S."/>
            <person name="Shabalina S.A."/>
            <person name="Pearson T.R."/>
            <person name="Brinkac L."/>
            <person name="Tan P."/>
            <person name="Nandi T."/>
            <person name="Crabtree J."/>
            <person name="Badger J."/>
            <person name="Beckstrom-Sternberg S."/>
            <person name="Saqib M."/>
            <person name="Schutzer S.E."/>
            <person name="Keim P."/>
            <person name="Nierman W.C."/>
        </authorList>
    </citation>
    <scope>NUCLEOTIDE SEQUENCE [LARGE SCALE GENOMIC DNA]</scope>
    <source>
        <strain>NCTC 10247</strain>
    </source>
</reference>
<feature type="chain" id="PRO_0000353310" description="DNA-directed RNA polymerase subunit beta'">
    <location>
        <begin position="1"/>
        <end position="1412"/>
    </location>
</feature>
<feature type="region of interest" description="Disordered" evidence="2">
    <location>
        <begin position="1392"/>
        <end position="1412"/>
    </location>
</feature>
<feature type="binding site" evidence="1">
    <location>
        <position position="70"/>
    </location>
    <ligand>
        <name>Zn(2+)</name>
        <dbReference type="ChEBI" id="CHEBI:29105"/>
        <label>1</label>
    </ligand>
</feature>
<feature type="binding site" evidence="1">
    <location>
        <position position="72"/>
    </location>
    <ligand>
        <name>Zn(2+)</name>
        <dbReference type="ChEBI" id="CHEBI:29105"/>
        <label>1</label>
    </ligand>
</feature>
<feature type="binding site" evidence="1">
    <location>
        <position position="85"/>
    </location>
    <ligand>
        <name>Zn(2+)</name>
        <dbReference type="ChEBI" id="CHEBI:29105"/>
        <label>1</label>
    </ligand>
</feature>
<feature type="binding site" evidence="1">
    <location>
        <position position="88"/>
    </location>
    <ligand>
        <name>Zn(2+)</name>
        <dbReference type="ChEBI" id="CHEBI:29105"/>
        <label>1</label>
    </ligand>
</feature>
<feature type="binding site" evidence="1">
    <location>
        <position position="460"/>
    </location>
    <ligand>
        <name>Mg(2+)</name>
        <dbReference type="ChEBI" id="CHEBI:18420"/>
    </ligand>
</feature>
<feature type="binding site" evidence="1">
    <location>
        <position position="462"/>
    </location>
    <ligand>
        <name>Mg(2+)</name>
        <dbReference type="ChEBI" id="CHEBI:18420"/>
    </ligand>
</feature>
<feature type="binding site" evidence="1">
    <location>
        <position position="464"/>
    </location>
    <ligand>
        <name>Mg(2+)</name>
        <dbReference type="ChEBI" id="CHEBI:18420"/>
    </ligand>
</feature>
<feature type="binding site" evidence="1">
    <location>
        <position position="819"/>
    </location>
    <ligand>
        <name>Zn(2+)</name>
        <dbReference type="ChEBI" id="CHEBI:29105"/>
        <label>2</label>
    </ligand>
</feature>
<feature type="binding site" evidence="1">
    <location>
        <position position="893"/>
    </location>
    <ligand>
        <name>Zn(2+)</name>
        <dbReference type="ChEBI" id="CHEBI:29105"/>
        <label>2</label>
    </ligand>
</feature>
<feature type="binding site" evidence="1">
    <location>
        <position position="900"/>
    </location>
    <ligand>
        <name>Zn(2+)</name>
        <dbReference type="ChEBI" id="CHEBI:29105"/>
        <label>2</label>
    </ligand>
</feature>
<feature type="binding site" evidence="1">
    <location>
        <position position="903"/>
    </location>
    <ligand>
        <name>Zn(2+)</name>
        <dbReference type="ChEBI" id="CHEBI:29105"/>
        <label>2</label>
    </ligand>
</feature>
<comment type="function">
    <text evidence="1">DNA-dependent RNA polymerase catalyzes the transcription of DNA into RNA using the four ribonucleoside triphosphates as substrates.</text>
</comment>
<comment type="catalytic activity">
    <reaction evidence="1">
        <text>RNA(n) + a ribonucleoside 5'-triphosphate = RNA(n+1) + diphosphate</text>
        <dbReference type="Rhea" id="RHEA:21248"/>
        <dbReference type="Rhea" id="RHEA-COMP:14527"/>
        <dbReference type="Rhea" id="RHEA-COMP:17342"/>
        <dbReference type="ChEBI" id="CHEBI:33019"/>
        <dbReference type="ChEBI" id="CHEBI:61557"/>
        <dbReference type="ChEBI" id="CHEBI:140395"/>
        <dbReference type="EC" id="2.7.7.6"/>
    </reaction>
</comment>
<comment type="cofactor">
    <cofactor evidence="1">
        <name>Mg(2+)</name>
        <dbReference type="ChEBI" id="CHEBI:18420"/>
    </cofactor>
    <text evidence="1">Binds 1 Mg(2+) ion per subunit.</text>
</comment>
<comment type="cofactor">
    <cofactor evidence="1">
        <name>Zn(2+)</name>
        <dbReference type="ChEBI" id="CHEBI:29105"/>
    </cofactor>
    <text evidence="1">Binds 2 Zn(2+) ions per subunit.</text>
</comment>
<comment type="subunit">
    <text evidence="1">The RNAP catalytic core consists of 2 alpha, 1 beta, 1 beta' and 1 omega subunit. When a sigma factor is associated with the core the holoenzyme is formed, which can initiate transcription.</text>
</comment>
<comment type="similarity">
    <text evidence="1">Belongs to the RNA polymerase beta' chain family.</text>
</comment>
<protein>
    <recommendedName>
        <fullName evidence="1">DNA-directed RNA polymerase subunit beta'</fullName>
        <shortName evidence="1">RNAP subunit beta'</shortName>
        <ecNumber evidence="1">2.7.7.6</ecNumber>
    </recommendedName>
    <alternativeName>
        <fullName evidence="1">RNA polymerase subunit beta'</fullName>
    </alternativeName>
    <alternativeName>
        <fullName evidence="1">Transcriptase subunit beta'</fullName>
    </alternativeName>
</protein>
<name>RPOC_BURM7</name>
<accession>A3MRU6</accession>
<keyword id="KW-0240">DNA-directed RNA polymerase</keyword>
<keyword id="KW-0460">Magnesium</keyword>
<keyword id="KW-0479">Metal-binding</keyword>
<keyword id="KW-0548">Nucleotidyltransferase</keyword>
<keyword id="KW-0804">Transcription</keyword>
<keyword id="KW-0808">Transferase</keyword>
<keyword id="KW-0862">Zinc</keyword>
<sequence length="1412" mass="155946">MKALLDLFKQVQQEEIFDAIKIGLASPDKIRSWSFGEVKKPETINYRTFKPERDGLFCAKIFGPIKDYECLCGKYKRLKHRGVICEKCGVEVTLAKVRRERMGHIELASPVAHIWFLKSLPSRLGMVLDMTLRDIERVLYFEAYVVIDPGMTPLKARQIMTEEDYYNKVEEYGDEFRAEMGAEGVRELLRSINIDEQVETLRTELKNTGSEAKIKKYAKRLKVLEAFQRSGIKPDWMILEVLPVLPPELRPLVPLDGGRFATSDLNDLYRRVINRNNRLKRLLELKAPEIIVRNEKRMLQEAVDSLLDNGRRGKAMTGANKRPLKSLADMIKGKGGRFRQNLLGKRVDYSGRSVIVVGPTLKLHQCGLPKLMALELFKPFIFNKLEVMGVATTIKAAKKEVENQTPVVWDILEEVIREHPVMLNRAPTLHRLGIQAFEPVLIEGKAIQLHPLVCAAFNADFDGDQMAVHVPLSLEAQMEARTLMLASNNVLFPANGDPSIVPSQDIVLGLYYATREAINGKGEGLSFTGVSEVIRAYENKEVELASRVNVRITEMVRNEDTSEGAPQFVPKISLYATTVGRAILSEILPPGLPFSVLNKPLKKKEISRLINTAFRKCGLRATVVFADQLMQSGFRLATRAGISICVDDMLVPTQKETIVGDAAKKVKEYDRQYMSGLVTAQERYNNVVDIWSATSEAVGKAMMEQLSTEPVIDRGGNETRQESFNSIYMMADSGARGSAVQIRQLAGMRGLMAKPDGSIIETPITANFREGLNVLQYFISTHGARKGLADTALKTANSGYLTRRLVDVTQDLVVVEDDCGTSNGVAMKALVEGGEVVEALRDRILGRVAASDVVNPETQETLYEAGALLDETAVEDIERLGIDEVRVRTALTCETRYGLCASCYGRDLGRGSLVNVGEAVGVIAAQSIGEPGTQLTMRTFHIGGAASRAAVASSVEAKSNGTVRFTASMRYVTNAKGEQIVISRSGEALITDDIGRERERHKIPYGATLLQLDGAAIKAGTQLATWDPLTRPIITEYGGTVKFENVEEGVTVAKQIDDVTGLSTLVVIDVKRRGSQAAKSVRPQVKLLDANGDEVKIPGTEHAVQIGFQVGALITVKDGQQVQVGEVLARIPTESQKTRDITGGLPRVAELFEARSPKDAGILAEVTGTVSFGKDTKGKQRLVITDLEGNQHEFLIAKEKQVLVHDGQVVNKGEMIVDGPADPHDILRLQGIEALSRYIVDEVQDVYRLQGVKINDKHIEVIVRQMLRRVQIVDNGDTRFIPGEQVERSDMLDENDRMIAEDKRPATYDNILLGITKASLSTDSFISAASFQETIRVLTEAAIMGKRDDLRGLKENVIVGRLIPAGTGLAFHKARKAKEQSDRERFDQIAAEEAFEFGTPSAPAEEPQHPAE</sequence>
<evidence type="ECO:0000255" key="1">
    <source>
        <dbReference type="HAMAP-Rule" id="MF_01322"/>
    </source>
</evidence>
<evidence type="ECO:0000256" key="2">
    <source>
        <dbReference type="SAM" id="MobiDB-lite"/>
    </source>
</evidence>